<reference key="1">
    <citation type="submission" date="2008-04" db="EMBL/GenBank/DDBJ databases">
        <title>Complete sequence of Yersinia pseudotuberculosis PB1/+.</title>
        <authorList>
            <person name="Copeland A."/>
            <person name="Lucas S."/>
            <person name="Lapidus A."/>
            <person name="Glavina del Rio T."/>
            <person name="Dalin E."/>
            <person name="Tice H."/>
            <person name="Bruce D."/>
            <person name="Goodwin L."/>
            <person name="Pitluck S."/>
            <person name="Munk A.C."/>
            <person name="Brettin T."/>
            <person name="Detter J.C."/>
            <person name="Han C."/>
            <person name="Tapia R."/>
            <person name="Schmutz J."/>
            <person name="Larimer F."/>
            <person name="Land M."/>
            <person name="Hauser L."/>
            <person name="Challacombe J.F."/>
            <person name="Green L."/>
            <person name="Lindler L.E."/>
            <person name="Nikolich M.P."/>
            <person name="Richardson P."/>
        </authorList>
    </citation>
    <scope>NUCLEOTIDE SEQUENCE [LARGE SCALE GENOMIC DNA]</scope>
    <source>
        <strain>PB1/+</strain>
    </source>
</reference>
<gene>
    <name evidence="1" type="primary">rpsT</name>
    <name type="ordered locus">YPTS_0639</name>
</gene>
<organism>
    <name type="scientific">Yersinia pseudotuberculosis serotype IB (strain PB1/+)</name>
    <dbReference type="NCBI Taxonomy" id="502801"/>
    <lineage>
        <taxon>Bacteria</taxon>
        <taxon>Pseudomonadati</taxon>
        <taxon>Pseudomonadota</taxon>
        <taxon>Gammaproteobacteria</taxon>
        <taxon>Enterobacterales</taxon>
        <taxon>Yersiniaceae</taxon>
        <taxon>Yersinia</taxon>
    </lineage>
</organism>
<dbReference type="EMBL" id="CP001048">
    <property type="protein sequence ID" value="ACC87623.1"/>
    <property type="molecule type" value="Genomic_DNA"/>
</dbReference>
<dbReference type="RefSeq" id="WP_002220715.1">
    <property type="nucleotide sequence ID" value="NZ_CP009780.1"/>
</dbReference>
<dbReference type="SMR" id="B2K3M4"/>
<dbReference type="GeneID" id="97457675"/>
<dbReference type="KEGG" id="ypb:YPTS_0639"/>
<dbReference type="PATRIC" id="fig|502801.10.peg.4321"/>
<dbReference type="GO" id="GO:0005829">
    <property type="term" value="C:cytosol"/>
    <property type="evidence" value="ECO:0007669"/>
    <property type="project" value="TreeGrafter"/>
</dbReference>
<dbReference type="GO" id="GO:0015935">
    <property type="term" value="C:small ribosomal subunit"/>
    <property type="evidence" value="ECO:0007669"/>
    <property type="project" value="TreeGrafter"/>
</dbReference>
<dbReference type="GO" id="GO:0070181">
    <property type="term" value="F:small ribosomal subunit rRNA binding"/>
    <property type="evidence" value="ECO:0007669"/>
    <property type="project" value="TreeGrafter"/>
</dbReference>
<dbReference type="GO" id="GO:0003735">
    <property type="term" value="F:structural constituent of ribosome"/>
    <property type="evidence" value="ECO:0007669"/>
    <property type="project" value="InterPro"/>
</dbReference>
<dbReference type="GO" id="GO:0006412">
    <property type="term" value="P:translation"/>
    <property type="evidence" value="ECO:0007669"/>
    <property type="project" value="UniProtKB-UniRule"/>
</dbReference>
<dbReference type="FunFam" id="1.20.58.110:FF:000001">
    <property type="entry name" value="30S ribosomal protein S20"/>
    <property type="match status" value="1"/>
</dbReference>
<dbReference type="Gene3D" id="1.20.58.110">
    <property type="entry name" value="Ribosomal protein S20"/>
    <property type="match status" value="1"/>
</dbReference>
<dbReference type="HAMAP" id="MF_00500">
    <property type="entry name" value="Ribosomal_bS20"/>
    <property type="match status" value="1"/>
</dbReference>
<dbReference type="InterPro" id="IPR002583">
    <property type="entry name" value="Ribosomal_bS20"/>
</dbReference>
<dbReference type="InterPro" id="IPR036510">
    <property type="entry name" value="Ribosomal_bS20_sf"/>
</dbReference>
<dbReference type="NCBIfam" id="TIGR00029">
    <property type="entry name" value="S20"/>
    <property type="match status" value="1"/>
</dbReference>
<dbReference type="PANTHER" id="PTHR33398">
    <property type="entry name" value="30S RIBOSOMAL PROTEIN S20"/>
    <property type="match status" value="1"/>
</dbReference>
<dbReference type="PANTHER" id="PTHR33398:SF1">
    <property type="entry name" value="SMALL RIBOSOMAL SUBUNIT PROTEIN BS20C"/>
    <property type="match status" value="1"/>
</dbReference>
<dbReference type="Pfam" id="PF01649">
    <property type="entry name" value="Ribosomal_S20p"/>
    <property type="match status" value="1"/>
</dbReference>
<dbReference type="SUPFAM" id="SSF46992">
    <property type="entry name" value="Ribosomal protein S20"/>
    <property type="match status" value="1"/>
</dbReference>
<sequence length="87" mass="9789">MANIKSAKKRAVQSEKRRKHNASRRSMVRTFIKKVYAAIAAGDKDAAQKAFNEMQPIVDRQSCKGLIHKNKAARHKSNLVAQINAMQ</sequence>
<accession>B2K3M4</accession>
<comment type="function">
    <text evidence="1">Binds directly to 16S ribosomal RNA.</text>
</comment>
<comment type="similarity">
    <text evidence="1">Belongs to the bacterial ribosomal protein bS20 family.</text>
</comment>
<keyword id="KW-0687">Ribonucleoprotein</keyword>
<keyword id="KW-0689">Ribosomal protein</keyword>
<keyword id="KW-0694">RNA-binding</keyword>
<keyword id="KW-0699">rRNA-binding</keyword>
<feature type="chain" id="PRO_1000126537" description="Small ribosomal subunit protein bS20">
    <location>
        <begin position="1"/>
        <end position="87"/>
    </location>
</feature>
<feature type="region of interest" description="Disordered" evidence="2">
    <location>
        <begin position="1"/>
        <end position="25"/>
    </location>
</feature>
<name>RS20_YERPB</name>
<proteinExistence type="inferred from homology"/>
<evidence type="ECO:0000255" key="1">
    <source>
        <dbReference type="HAMAP-Rule" id="MF_00500"/>
    </source>
</evidence>
<evidence type="ECO:0000256" key="2">
    <source>
        <dbReference type="SAM" id="MobiDB-lite"/>
    </source>
</evidence>
<evidence type="ECO:0000305" key="3"/>
<protein>
    <recommendedName>
        <fullName evidence="1">Small ribosomal subunit protein bS20</fullName>
    </recommendedName>
    <alternativeName>
        <fullName evidence="3">30S ribosomal protein S20</fullName>
    </alternativeName>
</protein>